<name>KAD_LACLA</name>
<keyword id="KW-0067">ATP-binding</keyword>
<keyword id="KW-0963">Cytoplasm</keyword>
<keyword id="KW-0418">Kinase</keyword>
<keyword id="KW-0479">Metal-binding</keyword>
<keyword id="KW-0545">Nucleotide biosynthesis</keyword>
<keyword id="KW-0547">Nucleotide-binding</keyword>
<keyword id="KW-1185">Reference proteome</keyword>
<keyword id="KW-0808">Transferase</keyword>
<keyword id="KW-0862">Zinc</keyword>
<accession>P58117</accession>
<proteinExistence type="inferred from homology"/>
<protein>
    <recommendedName>
        <fullName evidence="1">Adenylate kinase</fullName>
        <shortName evidence="1">AK</shortName>
        <ecNumber evidence="1">2.7.4.3</ecNumber>
    </recommendedName>
    <alternativeName>
        <fullName evidence="1">ATP-AMP transphosphorylase</fullName>
    </alternativeName>
    <alternativeName>
        <fullName evidence="1">ATP:AMP phosphotransferase</fullName>
    </alternativeName>
    <alternativeName>
        <fullName evidence="1">Adenylate monophosphate kinase</fullName>
    </alternativeName>
</protein>
<reference key="1">
    <citation type="journal article" date="2001" name="Genome Res.">
        <title>The complete genome sequence of the lactic acid bacterium Lactococcus lactis ssp. lactis IL1403.</title>
        <authorList>
            <person name="Bolotin A."/>
            <person name="Wincker P."/>
            <person name="Mauger S."/>
            <person name="Jaillon O."/>
            <person name="Malarme K."/>
            <person name="Weissenbach J."/>
            <person name="Ehrlich S.D."/>
            <person name="Sorokin A."/>
        </authorList>
    </citation>
    <scope>NUCLEOTIDE SEQUENCE [LARGE SCALE GENOMIC DNA]</scope>
    <source>
        <strain>IL1403</strain>
    </source>
</reference>
<gene>
    <name evidence="1" type="primary">adk</name>
    <name type="ordered locus">LL2077</name>
    <name type="ORF">L140714</name>
</gene>
<sequence length="215" mass="23688">MNLLIMGLPGAGKGTQAEFIVKNYGVNHISTGDMFRAAMKNETEMGKLAKSFIDKGELVPDEVTNGIVKERLAQDDIKASGFLLDGYPRTIDQAHALDTMLEELGIKLDAVVNIVVNPDILVDRLSGRYICRNCGATYHKIFNPTKVEGVCDVCGSHDLYQRADDVPETVKNRLDVNIKESAPIIEHYTELGLVKNIEGEQEISQVTEDIKKVLG</sequence>
<organism>
    <name type="scientific">Lactococcus lactis subsp. lactis (strain IL1403)</name>
    <name type="common">Streptococcus lactis</name>
    <dbReference type="NCBI Taxonomy" id="272623"/>
    <lineage>
        <taxon>Bacteria</taxon>
        <taxon>Bacillati</taxon>
        <taxon>Bacillota</taxon>
        <taxon>Bacilli</taxon>
        <taxon>Lactobacillales</taxon>
        <taxon>Streptococcaceae</taxon>
        <taxon>Lactococcus</taxon>
    </lineage>
</organism>
<comment type="function">
    <text evidence="1">Catalyzes the reversible transfer of the terminal phosphate group between ATP and AMP. Plays an important role in cellular energy homeostasis and in adenine nucleotide metabolism.</text>
</comment>
<comment type="catalytic activity">
    <reaction evidence="1">
        <text>AMP + ATP = 2 ADP</text>
        <dbReference type="Rhea" id="RHEA:12973"/>
        <dbReference type="ChEBI" id="CHEBI:30616"/>
        <dbReference type="ChEBI" id="CHEBI:456215"/>
        <dbReference type="ChEBI" id="CHEBI:456216"/>
        <dbReference type="EC" id="2.7.4.3"/>
    </reaction>
</comment>
<comment type="pathway">
    <text evidence="1">Purine metabolism; AMP biosynthesis via salvage pathway; AMP from ADP: step 1/1.</text>
</comment>
<comment type="subunit">
    <text evidence="1">Monomer.</text>
</comment>
<comment type="subcellular location">
    <subcellularLocation>
        <location evidence="1">Cytoplasm</location>
    </subcellularLocation>
</comment>
<comment type="domain">
    <text evidence="1">Consists of three domains, a large central CORE domain and two small peripheral domains, NMPbind and LID, which undergo movements during catalysis. The LID domain closes over the site of phosphoryl transfer upon ATP binding. Assembling and dissambling the active center during each catalytic cycle provides an effective means to prevent ATP hydrolysis. Some bacteria have evolved a zinc-coordinating structure that stabilizes the LID domain.</text>
</comment>
<comment type="similarity">
    <text evidence="1">Belongs to the adenylate kinase family.</text>
</comment>
<dbReference type="EC" id="2.7.4.3" evidence="1"/>
<dbReference type="EMBL" id="AE005176">
    <property type="protein sequence ID" value="AAK06175.1"/>
    <property type="molecule type" value="Genomic_DNA"/>
</dbReference>
<dbReference type="PIR" id="E86884">
    <property type="entry name" value="E86884"/>
</dbReference>
<dbReference type="RefSeq" id="NP_268234.1">
    <property type="nucleotide sequence ID" value="NC_002662.1"/>
</dbReference>
<dbReference type="RefSeq" id="WP_010906298.1">
    <property type="nucleotide sequence ID" value="NC_002662.1"/>
</dbReference>
<dbReference type="SMR" id="P58117"/>
<dbReference type="PaxDb" id="272623-L140714"/>
<dbReference type="EnsemblBacteria" id="AAK06175">
    <property type="protein sequence ID" value="AAK06175"/>
    <property type="gene ID" value="L140714"/>
</dbReference>
<dbReference type="KEGG" id="lla:L140714"/>
<dbReference type="PATRIC" id="fig|272623.7.peg.2236"/>
<dbReference type="eggNOG" id="COG0563">
    <property type="taxonomic scope" value="Bacteria"/>
</dbReference>
<dbReference type="HOGENOM" id="CLU_032354_1_2_9"/>
<dbReference type="OrthoDB" id="9805030at2"/>
<dbReference type="UniPathway" id="UPA00588">
    <property type="reaction ID" value="UER00649"/>
</dbReference>
<dbReference type="Proteomes" id="UP000002196">
    <property type="component" value="Chromosome"/>
</dbReference>
<dbReference type="GO" id="GO:0005737">
    <property type="term" value="C:cytoplasm"/>
    <property type="evidence" value="ECO:0007669"/>
    <property type="project" value="UniProtKB-SubCell"/>
</dbReference>
<dbReference type="GO" id="GO:0004017">
    <property type="term" value="F:adenylate kinase activity"/>
    <property type="evidence" value="ECO:0007669"/>
    <property type="project" value="UniProtKB-UniRule"/>
</dbReference>
<dbReference type="GO" id="GO:0005524">
    <property type="term" value="F:ATP binding"/>
    <property type="evidence" value="ECO:0007669"/>
    <property type="project" value="UniProtKB-UniRule"/>
</dbReference>
<dbReference type="GO" id="GO:0008270">
    <property type="term" value="F:zinc ion binding"/>
    <property type="evidence" value="ECO:0007669"/>
    <property type="project" value="UniProtKB-UniRule"/>
</dbReference>
<dbReference type="GO" id="GO:0044209">
    <property type="term" value="P:AMP salvage"/>
    <property type="evidence" value="ECO:0007669"/>
    <property type="project" value="UniProtKB-UniRule"/>
</dbReference>
<dbReference type="CDD" id="cd01428">
    <property type="entry name" value="ADK"/>
    <property type="match status" value="1"/>
</dbReference>
<dbReference type="FunFam" id="3.40.50.300:FF:000106">
    <property type="entry name" value="Adenylate kinase mitochondrial"/>
    <property type="match status" value="1"/>
</dbReference>
<dbReference type="Gene3D" id="3.40.50.300">
    <property type="entry name" value="P-loop containing nucleotide triphosphate hydrolases"/>
    <property type="match status" value="1"/>
</dbReference>
<dbReference type="HAMAP" id="MF_00235">
    <property type="entry name" value="Adenylate_kinase_Adk"/>
    <property type="match status" value="1"/>
</dbReference>
<dbReference type="InterPro" id="IPR006259">
    <property type="entry name" value="Adenyl_kin_sub"/>
</dbReference>
<dbReference type="InterPro" id="IPR000850">
    <property type="entry name" value="Adenylat/UMP-CMP_kin"/>
</dbReference>
<dbReference type="InterPro" id="IPR033690">
    <property type="entry name" value="Adenylat_kinase_CS"/>
</dbReference>
<dbReference type="InterPro" id="IPR007862">
    <property type="entry name" value="Adenylate_kinase_lid-dom"/>
</dbReference>
<dbReference type="InterPro" id="IPR027417">
    <property type="entry name" value="P-loop_NTPase"/>
</dbReference>
<dbReference type="NCBIfam" id="TIGR01351">
    <property type="entry name" value="adk"/>
    <property type="match status" value="1"/>
</dbReference>
<dbReference type="NCBIfam" id="NF001380">
    <property type="entry name" value="PRK00279.1-2"/>
    <property type="match status" value="1"/>
</dbReference>
<dbReference type="NCBIfam" id="NF001381">
    <property type="entry name" value="PRK00279.1-3"/>
    <property type="match status" value="1"/>
</dbReference>
<dbReference type="NCBIfam" id="NF001382">
    <property type="entry name" value="PRK00279.1-4"/>
    <property type="match status" value="1"/>
</dbReference>
<dbReference type="PANTHER" id="PTHR23359">
    <property type="entry name" value="NUCLEOTIDE KINASE"/>
    <property type="match status" value="1"/>
</dbReference>
<dbReference type="Pfam" id="PF00406">
    <property type="entry name" value="ADK"/>
    <property type="match status" value="1"/>
</dbReference>
<dbReference type="Pfam" id="PF05191">
    <property type="entry name" value="ADK_lid"/>
    <property type="match status" value="1"/>
</dbReference>
<dbReference type="PRINTS" id="PR00094">
    <property type="entry name" value="ADENYLTKNASE"/>
</dbReference>
<dbReference type="SUPFAM" id="SSF52540">
    <property type="entry name" value="P-loop containing nucleoside triphosphate hydrolases"/>
    <property type="match status" value="1"/>
</dbReference>
<dbReference type="PROSITE" id="PS00113">
    <property type="entry name" value="ADENYLATE_KINASE"/>
    <property type="match status" value="1"/>
</dbReference>
<feature type="chain" id="PRO_0000158781" description="Adenylate kinase">
    <location>
        <begin position="1"/>
        <end position="215"/>
    </location>
</feature>
<feature type="region of interest" description="NMP" evidence="1">
    <location>
        <begin position="30"/>
        <end position="59"/>
    </location>
</feature>
<feature type="region of interest" description="LID" evidence="1">
    <location>
        <begin position="127"/>
        <end position="165"/>
    </location>
</feature>
<feature type="binding site" evidence="1">
    <location>
        <begin position="10"/>
        <end position="15"/>
    </location>
    <ligand>
        <name>ATP</name>
        <dbReference type="ChEBI" id="CHEBI:30616"/>
    </ligand>
</feature>
<feature type="binding site" evidence="1">
    <location>
        <position position="31"/>
    </location>
    <ligand>
        <name>AMP</name>
        <dbReference type="ChEBI" id="CHEBI:456215"/>
    </ligand>
</feature>
<feature type="binding site" evidence="1">
    <location>
        <position position="36"/>
    </location>
    <ligand>
        <name>AMP</name>
        <dbReference type="ChEBI" id="CHEBI:456215"/>
    </ligand>
</feature>
<feature type="binding site" evidence="1">
    <location>
        <begin position="57"/>
        <end position="59"/>
    </location>
    <ligand>
        <name>AMP</name>
        <dbReference type="ChEBI" id="CHEBI:456215"/>
    </ligand>
</feature>
<feature type="binding site" evidence="1">
    <location>
        <begin position="86"/>
        <end position="89"/>
    </location>
    <ligand>
        <name>AMP</name>
        <dbReference type="ChEBI" id="CHEBI:456215"/>
    </ligand>
</feature>
<feature type="binding site" evidence="1">
    <location>
        <position position="93"/>
    </location>
    <ligand>
        <name>AMP</name>
        <dbReference type="ChEBI" id="CHEBI:456215"/>
    </ligand>
</feature>
<feature type="binding site" evidence="1">
    <location>
        <position position="128"/>
    </location>
    <ligand>
        <name>ATP</name>
        <dbReference type="ChEBI" id="CHEBI:30616"/>
    </ligand>
</feature>
<feature type="binding site" evidence="1">
    <location>
        <position position="131"/>
    </location>
    <ligand>
        <name>Zn(2+)</name>
        <dbReference type="ChEBI" id="CHEBI:29105"/>
        <note>structural</note>
    </ligand>
</feature>
<feature type="binding site" evidence="1">
    <location>
        <position position="134"/>
    </location>
    <ligand>
        <name>Zn(2+)</name>
        <dbReference type="ChEBI" id="CHEBI:29105"/>
        <note>structural</note>
    </ligand>
</feature>
<feature type="binding site" evidence="1">
    <location>
        <begin position="137"/>
        <end position="138"/>
    </location>
    <ligand>
        <name>ATP</name>
        <dbReference type="ChEBI" id="CHEBI:30616"/>
    </ligand>
</feature>
<feature type="binding site" evidence="1">
    <location>
        <position position="151"/>
    </location>
    <ligand>
        <name>Zn(2+)</name>
        <dbReference type="ChEBI" id="CHEBI:29105"/>
        <note>structural</note>
    </ligand>
</feature>
<feature type="binding site" evidence="1">
    <location>
        <position position="154"/>
    </location>
    <ligand>
        <name>Zn(2+)</name>
        <dbReference type="ChEBI" id="CHEBI:29105"/>
        <note>structural</note>
    </ligand>
</feature>
<feature type="binding site" evidence="1">
    <location>
        <position position="162"/>
    </location>
    <ligand>
        <name>AMP</name>
        <dbReference type="ChEBI" id="CHEBI:456215"/>
    </ligand>
</feature>
<feature type="binding site" evidence="1">
    <location>
        <position position="173"/>
    </location>
    <ligand>
        <name>AMP</name>
        <dbReference type="ChEBI" id="CHEBI:456215"/>
    </ligand>
</feature>
<feature type="binding site" evidence="1">
    <location>
        <position position="201"/>
    </location>
    <ligand>
        <name>ATP</name>
        <dbReference type="ChEBI" id="CHEBI:30616"/>
    </ligand>
</feature>
<evidence type="ECO:0000255" key="1">
    <source>
        <dbReference type="HAMAP-Rule" id="MF_00235"/>
    </source>
</evidence>